<comment type="function">
    <text evidence="1">Catalyzes the reversible formation of acyl-phosphate (acyl-PO(4)) from acyl-[acyl-carrier-protein] (acyl-ACP). This enzyme utilizes acyl-ACP as fatty acyl donor, but not acyl-CoA.</text>
</comment>
<comment type="catalytic activity">
    <reaction evidence="1">
        <text>a fatty acyl-[ACP] + phosphate = an acyl phosphate + holo-[ACP]</text>
        <dbReference type="Rhea" id="RHEA:42292"/>
        <dbReference type="Rhea" id="RHEA-COMP:9685"/>
        <dbReference type="Rhea" id="RHEA-COMP:14125"/>
        <dbReference type="ChEBI" id="CHEBI:43474"/>
        <dbReference type="ChEBI" id="CHEBI:59918"/>
        <dbReference type="ChEBI" id="CHEBI:64479"/>
        <dbReference type="ChEBI" id="CHEBI:138651"/>
        <dbReference type="EC" id="2.3.1.274"/>
    </reaction>
</comment>
<comment type="pathway">
    <text evidence="1">Lipid metabolism; phospholipid metabolism.</text>
</comment>
<comment type="subunit">
    <text evidence="1">Homodimer. Probably interacts with PlsY.</text>
</comment>
<comment type="subcellular location">
    <subcellularLocation>
        <location evidence="1">Cytoplasm</location>
    </subcellularLocation>
    <text evidence="1">Associated with the membrane possibly through PlsY.</text>
</comment>
<comment type="similarity">
    <text evidence="1">Belongs to the PlsX family.</text>
</comment>
<reference key="1">
    <citation type="submission" date="2008-02" db="EMBL/GenBank/DDBJ databases">
        <title>Complete sequence of Shewanella woodyi ATCC 51908.</title>
        <authorList>
            <consortium name="US DOE Joint Genome Institute"/>
            <person name="Copeland A."/>
            <person name="Lucas S."/>
            <person name="Lapidus A."/>
            <person name="Glavina del Rio T."/>
            <person name="Dalin E."/>
            <person name="Tice H."/>
            <person name="Bruce D."/>
            <person name="Goodwin L."/>
            <person name="Pitluck S."/>
            <person name="Sims D."/>
            <person name="Brettin T."/>
            <person name="Detter J.C."/>
            <person name="Han C."/>
            <person name="Kuske C.R."/>
            <person name="Schmutz J."/>
            <person name="Larimer F."/>
            <person name="Land M."/>
            <person name="Hauser L."/>
            <person name="Kyrpides N."/>
            <person name="Lykidis A."/>
            <person name="Zhao J.-S."/>
            <person name="Richardson P."/>
        </authorList>
    </citation>
    <scope>NUCLEOTIDE SEQUENCE [LARGE SCALE GENOMIC DNA]</scope>
    <source>
        <strain>ATCC 51908 / MS32</strain>
    </source>
</reference>
<keyword id="KW-0963">Cytoplasm</keyword>
<keyword id="KW-0444">Lipid biosynthesis</keyword>
<keyword id="KW-0443">Lipid metabolism</keyword>
<keyword id="KW-0594">Phospholipid biosynthesis</keyword>
<keyword id="KW-1208">Phospholipid metabolism</keyword>
<keyword id="KW-1185">Reference proteome</keyword>
<keyword id="KW-0808">Transferase</keyword>
<accession>B1KRB6</accession>
<dbReference type="EC" id="2.3.1.274" evidence="1"/>
<dbReference type="EMBL" id="CP000961">
    <property type="protein sequence ID" value="ACA86323.1"/>
    <property type="molecule type" value="Genomic_DNA"/>
</dbReference>
<dbReference type="RefSeq" id="WP_012324669.1">
    <property type="nucleotide sequence ID" value="NC_010506.1"/>
</dbReference>
<dbReference type="SMR" id="B1KRB6"/>
<dbReference type="STRING" id="392500.Swoo_2039"/>
<dbReference type="KEGG" id="swd:Swoo_2039"/>
<dbReference type="eggNOG" id="COG0416">
    <property type="taxonomic scope" value="Bacteria"/>
</dbReference>
<dbReference type="HOGENOM" id="CLU_039379_1_0_6"/>
<dbReference type="UniPathway" id="UPA00085"/>
<dbReference type="Proteomes" id="UP000002168">
    <property type="component" value="Chromosome"/>
</dbReference>
<dbReference type="GO" id="GO:0005737">
    <property type="term" value="C:cytoplasm"/>
    <property type="evidence" value="ECO:0007669"/>
    <property type="project" value="UniProtKB-SubCell"/>
</dbReference>
<dbReference type="GO" id="GO:0043811">
    <property type="term" value="F:phosphate:acyl-[acyl carrier protein] acyltransferase activity"/>
    <property type="evidence" value="ECO:0007669"/>
    <property type="project" value="UniProtKB-UniRule"/>
</dbReference>
<dbReference type="GO" id="GO:0006633">
    <property type="term" value="P:fatty acid biosynthetic process"/>
    <property type="evidence" value="ECO:0007669"/>
    <property type="project" value="UniProtKB-UniRule"/>
</dbReference>
<dbReference type="GO" id="GO:0008654">
    <property type="term" value="P:phospholipid biosynthetic process"/>
    <property type="evidence" value="ECO:0007669"/>
    <property type="project" value="UniProtKB-KW"/>
</dbReference>
<dbReference type="Gene3D" id="3.40.718.10">
    <property type="entry name" value="Isopropylmalate Dehydrogenase"/>
    <property type="match status" value="1"/>
</dbReference>
<dbReference type="HAMAP" id="MF_00019">
    <property type="entry name" value="PlsX"/>
    <property type="match status" value="1"/>
</dbReference>
<dbReference type="InterPro" id="IPR003664">
    <property type="entry name" value="FA_synthesis"/>
</dbReference>
<dbReference type="InterPro" id="IPR012281">
    <property type="entry name" value="Phospholipid_synth_PlsX-like"/>
</dbReference>
<dbReference type="NCBIfam" id="TIGR00182">
    <property type="entry name" value="plsX"/>
    <property type="match status" value="1"/>
</dbReference>
<dbReference type="PANTHER" id="PTHR30100">
    <property type="entry name" value="FATTY ACID/PHOSPHOLIPID SYNTHESIS PROTEIN PLSX"/>
    <property type="match status" value="1"/>
</dbReference>
<dbReference type="PANTHER" id="PTHR30100:SF1">
    <property type="entry name" value="PHOSPHATE ACYLTRANSFERASE"/>
    <property type="match status" value="1"/>
</dbReference>
<dbReference type="Pfam" id="PF02504">
    <property type="entry name" value="FA_synthesis"/>
    <property type="match status" value="1"/>
</dbReference>
<dbReference type="PIRSF" id="PIRSF002465">
    <property type="entry name" value="Phsphlp_syn_PlsX"/>
    <property type="match status" value="1"/>
</dbReference>
<dbReference type="SUPFAM" id="SSF53659">
    <property type="entry name" value="Isocitrate/Isopropylmalate dehydrogenase-like"/>
    <property type="match status" value="1"/>
</dbReference>
<proteinExistence type="inferred from homology"/>
<organism>
    <name type="scientific">Shewanella woodyi (strain ATCC 51908 / MS32)</name>
    <dbReference type="NCBI Taxonomy" id="392500"/>
    <lineage>
        <taxon>Bacteria</taxon>
        <taxon>Pseudomonadati</taxon>
        <taxon>Pseudomonadota</taxon>
        <taxon>Gammaproteobacteria</taxon>
        <taxon>Alteromonadales</taxon>
        <taxon>Shewanellaceae</taxon>
        <taxon>Shewanella</taxon>
    </lineage>
</organism>
<gene>
    <name evidence="1" type="primary">plsX</name>
    <name type="ordered locus">Swoo_2039</name>
</gene>
<name>PLSX_SHEWM</name>
<evidence type="ECO:0000255" key="1">
    <source>
        <dbReference type="HAMAP-Rule" id="MF_00019"/>
    </source>
</evidence>
<feature type="chain" id="PRO_1000089938" description="Phosphate acyltransferase">
    <location>
        <begin position="1"/>
        <end position="342"/>
    </location>
</feature>
<sequence length="342" mass="37108">MTDLTLALDVMGGDYGPRVTVPATLQALHLYPSLHVVLVGNQPEIEHFLPKAESSIRQRIEILHTTEVVSMSDRPVHALRNRKQSSMRLAIELVRDGKAQACLSAGNTGALMAIAKVLLKTLPGIDRPALVSCLPAVNQKPVYLLDLGANVSCCSETLFQFAVMGSVLSEAVDKNEQPKVALLNVGIEEIKGNDQVQQAGQLLQQSPQINYVGFIEGNDLYSGNVDVIVCDGFVGNITLKTSEGIAKLLVNQLEKGLTKGFFVRLMAKLIAPRINSVLKQMNPDHYNGASLIGLRGIVVKSHGSADESAYLQAITLAVTEAQRRLPKMIEERLESILLDINN</sequence>
<protein>
    <recommendedName>
        <fullName evidence="1">Phosphate acyltransferase</fullName>
        <ecNumber evidence="1">2.3.1.274</ecNumber>
    </recommendedName>
    <alternativeName>
        <fullName evidence="1">Acyl-ACP phosphotransacylase</fullName>
    </alternativeName>
    <alternativeName>
        <fullName evidence="1">Acyl-[acyl-carrier-protein]--phosphate acyltransferase</fullName>
    </alternativeName>
    <alternativeName>
        <fullName evidence="1">Phosphate-acyl-ACP acyltransferase</fullName>
    </alternativeName>
</protein>